<accession>P45378</accession>
<accession>A8MQ76</accession>
<accession>A8MSW1</accession>
<accession>B3KPX3</accession>
<accession>B7WP64</accession>
<accession>B7ZL26</accession>
<accession>B7ZVV9</accession>
<accession>Q12975</accession>
<accession>Q12976</accession>
<accession>Q12977</accession>
<accession>Q12978</accession>
<accession>Q17RG9</accession>
<accession>Q6FH29</accession>
<accession>Q6N056</accession>
<accession>Q86TH6</accession>
<reference key="1">
    <citation type="journal article" date="1994" name="DNA Cell Biol.">
        <title>Isolation and characterization of human fast skeletal beta troponin T cDNA: comparative sequence analysis of isoforms and insight into the evolution of members of a multigene family.</title>
        <authorList>
            <person name="Wu Q.-L."/>
            <person name="Jha P.K."/>
            <person name="Raychowdhury M.K."/>
            <person name="Du Y."/>
            <person name="Leavis P.C."/>
            <person name="Sarkar S."/>
        </authorList>
    </citation>
    <scope>NUCLEOTIDE SEQUENCE [MRNA] (ISOFORM 2)</scope>
    <source>
        <tissue>Fetal skeletal muscle</tissue>
    </source>
</reference>
<reference key="2">
    <citation type="submission" date="1997-09" db="EMBL/GenBank/DDBJ databases">
        <title>Genomic structure of the fast skeletal troponin T gene (TNNT3).</title>
        <authorList>
            <person name="Stefancsik R."/>
            <person name="Mao C."/>
            <person name="Randall J."/>
            <person name="Jha P.K."/>
            <person name="Sarkar S."/>
        </authorList>
    </citation>
    <scope>NUCLEOTIDE SEQUENCE [GENOMIC DNA]</scope>
</reference>
<reference key="3">
    <citation type="journal article" date="2004" name="Nat. Genet.">
        <title>Complete sequencing and characterization of 21,243 full-length human cDNAs.</title>
        <authorList>
            <person name="Ota T."/>
            <person name="Suzuki Y."/>
            <person name="Nishikawa T."/>
            <person name="Otsuki T."/>
            <person name="Sugiyama T."/>
            <person name="Irie R."/>
            <person name="Wakamatsu A."/>
            <person name="Hayashi K."/>
            <person name="Sato H."/>
            <person name="Nagai K."/>
            <person name="Kimura K."/>
            <person name="Makita H."/>
            <person name="Sekine M."/>
            <person name="Obayashi M."/>
            <person name="Nishi T."/>
            <person name="Shibahara T."/>
            <person name="Tanaka T."/>
            <person name="Ishii S."/>
            <person name="Yamamoto J."/>
            <person name="Saito K."/>
            <person name="Kawai Y."/>
            <person name="Isono Y."/>
            <person name="Nakamura Y."/>
            <person name="Nagahari K."/>
            <person name="Murakami K."/>
            <person name="Yasuda T."/>
            <person name="Iwayanagi T."/>
            <person name="Wagatsuma M."/>
            <person name="Shiratori A."/>
            <person name="Sudo H."/>
            <person name="Hosoiri T."/>
            <person name="Kaku Y."/>
            <person name="Kodaira H."/>
            <person name="Kondo H."/>
            <person name="Sugawara M."/>
            <person name="Takahashi M."/>
            <person name="Kanda K."/>
            <person name="Yokoi T."/>
            <person name="Furuya T."/>
            <person name="Kikkawa E."/>
            <person name="Omura Y."/>
            <person name="Abe K."/>
            <person name="Kamihara K."/>
            <person name="Katsuta N."/>
            <person name="Sato K."/>
            <person name="Tanikawa M."/>
            <person name="Yamazaki M."/>
            <person name="Ninomiya K."/>
            <person name="Ishibashi T."/>
            <person name="Yamashita H."/>
            <person name="Murakawa K."/>
            <person name="Fujimori K."/>
            <person name="Tanai H."/>
            <person name="Kimata M."/>
            <person name="Watanabe M."/>
            <person name="Hiraoka S."/>
            <person name="Chiba Y."/>
            <person name="Ishida S."/>
            <person name="Ono Y."/>
            <person name="Takiguchi S."/>
            <person name="Watanabe S."/>
            <person name="Yosida M."/>
            <person name="Hotuta T."/>
            <person name="Kusano J."/>
            <person name="Kanehori K."/>
            <person name="Takahashi-Fujii A."/>
            <person name="Hara H."/>
            <person name="Tanase T.-O."/>
            <person name="Nomura Y."/>
            <person name="Togiya S."/>
            <person name="Komai F."/>
            <person name="Hara R."/>
            <person name="Takeuchi K."/>
            <person name="Arita M."/>
            <person name="Imose N."/>
            <person name="Musashino K."/>
            <person name="Yuuki H."/>
            <person name="Oshima A."/>
            <person name="Sasaki N."/>
            <person name="Aotsuka S."/>
            <person name="Yoshikawa Y."/>
            <person name="Matsunawa H."/>
            <person name="Ichihara T."/>
            <person name="Shiohata N."/>
            <person name="Sano S."/>
            <person name="Moriya S."/>
            <person name="Momiyama H."/>
            <person name="Satoh N."/>
            <person name="Takami S."/>
            <person name="Terashima Y."/>
            <person name="Suzuki O."/>
            <person name="Nakagawa S."/>
            <person name="Senoh A."/>
            <person name="Mizoguchi H."/>
            <person name="Goto Y."/>
            <person name="Shimizu F."/>
            <person name="Wakebe H."/>
            <person name="Hishigaki H."/>
            <person name="Watanabe T."/>
            <person name="Sugiyama A."/>
            <person name="Takemoto M."/>
            <person name="Kawakami B."/>
            <person name="Yamazaki M."/>
            <person name="Watanabe K."/>
            <person name="Kumagai A."/>
            <person name="Itakura S."/>
            <person name="Fukuzumi Y."/>
            <person name="Fujimori Y."/>
            <person name="Komiyama M."/>
            <person name="Tashiro H."/>
            <person name="Tanigami A."/>
            <person name="Fujiwara T."/>
            <person name="Ono T."/>
            <person name="Yamada K."/>
            <person name="Fujii Y."/>
            <person name="Ozaki K."/>
            <person name="Hirao M."/>
            <person name="Ohmori Y."/>
            <person name="Kawabata A."/>
            <person name="Hikiji T."/>
            <person name="Kobatake N."/>
            <person name="Inagaki H."/>
            <person name="Ikema Y."/>
            <person name="Okamoto S."/>
            <person name="Okitani R."/>
            <person name="Kawakami T."/>
            <person name="Noguchi S."/>
            <person name="Itoh T."/>
            <person name="Shigeta K."/>
            <person name="Senba T."/>
            <person name="Matsumura K."/>
            <person name="Nakajima Y."/>
            <person name="Mizuno T."/>
            <person name="Morinaga M."/>
            <person name="Sasaki M."/>
            <person name="Togashi T."/>
            <person name="Oyama M."/>
            <person name="Hata H."/>
            <person name="Watanabe M."/>
            <person name="Komatsu T."/>
            <person name="Mizushima-Sugano J."/>
            <person name="Satoh T."/>
            <person name="Shirai Y."/>
            <person name="Takahashi Y."/>
            <person name="Nakagawa K."/>
            <person name="Okumura K."/>
            <person name="Nagase T."/>
            <person name="Nomura N."/>
            <person name="Kikuchi H."/>
            <person name="Masuho Y."/>
            <person name="Yamashita R."/>
            <person name="Nakai K."/>
            <person name="Yada T."/>
            <person name="Nakamura Y."/>
            <person name="Ohara O."/>
            <person name="Isogai T."/>
            <person name="Sugano S."/>
        </authorList>
    </citation>
    <scope>NUCLEOTIDE SEQUENCE [LARGE SCALE MRNA] (ISOFORM 7)</scope>
    <source>
        <tissue>Skeletal muscle</tissue>
    </source>
</reference>
<reference key="4">
    <citation type="submission" date="2006-06" db="EMBL/GenBank/DDBJ databases">
        <authorList>
            <person name="Li H."/>
            <person name="Nong W."/>
            <person name="Zhou G."/>
            <person name="Ke R."/>
            <person name="Shen C."/>
            <person name="Liang M."/>
            <person name="Tang Z."/>
            <person name="Huang B."/>
            <person name="Lin L."/>
            <person name="Yang S."/>
        </authorList>
    </citation>
    <scope>NUCLEOTIDE SEQUENCE [LARGE SCALE MRNA] (ISOFORM 7)</scope>
</reference>
<reference key="5">
    <citation type="journal article" date="2007" name="BMC Genomics">
        <title>The full-ORF clone resource of the German cDNA consortium.</title>
        <authorList>
            <person name="Bechtel S."/>
            <person name="Rosenfelder H."/>
            <person name="Duda A."/>
            <person name="Schmidt C.P."/>
            <person name="Ernst U."/>
            <person name="Wellenreuther R."/>
            <person name="Mehrle A."/>
            <person name="Schuster C."/>
            <person name="Bahr A."/>
            <person name="Bloecker H."/>
            <person name="Heubner D."/>
            <person name="Hoerlein A."/>
            <person name="Michel G."/>
            <person name="Wedler H."/>
            <person name="Koehrer K."/>
            <person name="Ottenwaelder B."/>
            <person name="Poustka A."/>
            <person name="Wiemann S."/>
            <person name="Schupp I."/>
        </authorList>
    </citation>
    <scope>NUCLEOTIDE SEQUENCE [LARGE SCALE MRNA] (ISOFORM 6)</scope>
    <source>
        <tissue>Liver</tissue>
    </source>
</reference>
<reference key="6">
    <citation type="submission" date="2004-06" db="EMBL/GenBank/DDBJ databases">
        <title>Cloning of human full open reading frames in Gateway(TM) system entry vector (pDONR201).</title>
        <authorList>
            <person name="Halleck A."/>
            <person name="Ebert L."/>
            <person name="Mkoundinya M."/>
            <person name="Schick M."/>
            <person name="Eisenstein S."/>
            <person name="Neubert P."/>
            <person name="Kstrang K."/>
            <person name="Schatten R."/>
            <person name="Shen B."/>
            <person name="Henze S."/>
            <person name="Mar W."/>
            <person name="Korn B."/>
            <person name="Zuo D."/>
            <person name="Hu Y."/>
            <person name="LaBaer J."/>
        </authorList>
    </citation>
    <scope>NUCLEOTIDE SEQUENCE [LARGE SCALE MRNA] (ISOFORM 6)</scope>
</reference>
<reference key="7">
    <citation type="submission" date="2004-10" db="EMBL/GenBank/DDBJ databases">
        <title>Cloning of human full-length CDSs in BD Creator(TM) system donor vector.</title>
        <authorList>
            <person name="Kalnine N."/>
            <person name="Chen X."/>
            <person name="Rolfs A."/>
            <person name="Halleck A."/>
            <person name="Hines L."/>
            <person name="Eisenstein S."/>
            <person name="Koundinya M."/>
            <person name="Raphael J."/>
            <person name="Moreira D."/>
            <person name="Kelley T."/>
            <person name="LaBaer J."/>
            <person name="Lin Y."/>
            <person name="Phelan M."/>
            <person name="Farmer A."/>
        </authorList>
    </citation>
    <scope>NUCLEOTIDE SEQUENCE [LARGE SCALE MRNA] (ISOFORM 6)</scope>
</reference>
<reference key="8">
    <citation type="journal article" date="2006" name="Nature">
        <title>Human chromosome 11 DNA sequence and analysis including novel gene identification.</title>
        <authorList>
            <person name="Taylor T.D."/>
            <person name="Noguchi H."/>
            <person name="Totoki Y."/>
            <person name="Toyoda A."/>
            <person name="Kuroki Y."/>
            <person name="Dewar K."/>
            <person name="Lloyd C."/>
            <person name="Itoh T."/>
            <person name="Takeda T."/>
            <person name="Kim D.-W."/>
            <person name="She X."/>
            <person name="Barlow K.F."/>
            <person name="Bloom T."/>
            <person name="Bruford E."/>
            <person name="Chang J.L."/>
            <person name="Cuomo C.A."/>
            <person name="Eichler E."/>
            <person name="FitzGerald M.G."/>
            <person name="Jaffe D.B."/>
            <person name="LaButti K."/>
            <person name="Nicol R."/>
            <person name="Park H.-S."/>
            <person name="Seaman C."/>
            <person name="Sougnez C."/>
            <person name="Yang X."/>
            <person name="Zimmer A.R."/>
            <person name="Zody M.C."/>
            <person name="Birren B.W."/>
            <person name="Nusbaum C."/>
            <person name="Fujiyama A."/>
            <person name="Hattori M."/>
            <person name="Rogers J."/>
            <person name="Lander E.S."/>
            <person name="Sakaki Y."/>
        </authorList>
    </citation>
    <scope>NUCLEOTIDE SEQUENCE [LARGE SCALE GENOMIC DNA]</scope>
</reference>
<reference key="9">
    <citation type="journal article" date="2004" name="Genome Res.">
        <title>The status, quality, and expansion of the NIH full-length cDNA project: the Mammalian Gene Collection (MGC).</title>
        <authorList>
            <consortium name="The MGC Project Team"/>
        </authorList>
    </citation>
    <scope>NUCLEOTIDE SEQUENCE [LARGE SCALE MRNA] (ISOFORMS 4; 6 AND 7)</scope>
    <source>
        <tissue>Lung</tissue>
    </source>
</reference>
<reference key="10">
    <citation type="journal article" date="1994" name="FEBS Lett.">
        <title>Identification of a fetal exon in the human fast troponin T gene.</title>
        <authorList>
            <person name="Briggs M.M."/>
            <person name="Maready M."/>
            <person name="Schmidt J.M."/>
            <person name="Schachat F."/>
        </authorList>
    </citation>
    <scope>NUCLEOTIDE SEQUENCE [MRNA] OF 1-67 (ISOFORMS 1; 2; 3; 4 AND 5)</scope>
    <source>
        <tissue>Skeletal muscle</tissue>
    </source>
</reference>
<reference key="11">
    <citation type="journal article" date="2003" name="Am. J. Hum. Genet.">
        <title>Mutations in TNNT3 cause multiple congenital contractures: a second locus for distal arthrogryposis type 2B.</title>
        <authorList>
            <person name="Sung S.S."/>
            <person name="Brassington A.-M.E."/>
            <person name="Krakowiak P.A."/>
            <person name="Carey J.C."/>
            <person name="Jorde L.B."/>
            <person name="Bamshad M."/>
        </authorList>
    </citation>
    <scope>INVOLVEMENT IN DA2B2</scope>
    <scope>VARIANT DA2B2 HIS-74</scope>
</reference>
<reference key="12">
    <citation type="journal article" date="2009" name="Clin. Orthop. Relat. Res.">
        <title>Skeletal muscle contractile gene (TNNT3, MYH3, TPM2) mutations not found in vertical talus or clubfoot.</title>
        <authorList>
            <person name="Gurnett C.A."/>
            <person name="Alaee F."/>
            <person name="Desruisseau D."/>
            <person name="Boehm S."/>
            <person name="Dobbs M.B."/>
        </authorList>
    </citation>
    <scope>INVOLVEMENT IN DA2B2</scope>
    <scope>VARIANT DA2B2 HIS-74</scope>
</reference>
<reference key="13">
    <citation type="journal article" date="2011" name="Eur. J. Med. Genet.">
        <title>A novel mutation in TNNT3 associated with Sheldon-Hall syndrome in a Chinese family with vertical talus.</title>
        <authorList>
            <person name="Zhao N."/>
            <person name="Jiang M."/>
            <person name="Han W."/>
            <person name="Bian C."/>
            <person name="Li X."/>
            <person name="Huang F."/>
            <person name="Kong Q."/>
            <person name="Li J."/>
        </authorList>
    </citation>
    <scope>INVOLVEMENT IN DA2B2</scope>
    <scope>VARIANT DA2B2 CYS-74</scope>
</reference>
<reference key="14">
    <citation type="journal article" date="2014" name="Mol. Syndromol.">
        <title>Exome sequencing identifies a dominant TNNT3 mutation in a large family with distal arthrogryposis.</title>
        <authorList>
            <person name="Daly S.B."/>
            <person name="Shah H."/>
            <person name="O'Sullivan J."/>
            <person name="Anderson B."/>
            <person name="Bhaskar S."/>
            <person name="Williams S."/>
            <person name="Al-Sheqaih N."/>
            <person name="Mueed Bidchol A."/>
            <person name="Banka S."/>
            <person name="Newman W.G."/>
            <person name="Girisha K.M."/>
        </authorList>
    </citation>
    <scope>INVOLVEMENT IN DA2B2</scope>
    <scope>VARIANT DA2B2 HIS-74</scope>
</reference>
<organism>
    <name type="scientific">Homo sapiens</name>
    <name type="common">Human</name>
    <dbReference type="NCBI Taxonomy" id="9606"/>
    <lineage>
        <taxon>Eukaryota</taxon>
        <taxon>Metazoa</taxon>
        <taxon>Chordata</taxon>
        <taxon>Craniata</taxon>
        <taxon>Vertebrata</taxon>
        <taxon>Euteleostomi</taxon>
        <taxon>Mammalia</taxon>
        <taxon>Eutheria</taxon>
        <taxon>Euarchontoglires</taxon>
        <taxon>Primates</taxon>
        <taxon>Haplorrhini</taxon>
        <taxon>Catarrhini</taxon>
        <taxon>Hominidae</taxon>
        <taxon>Homo</taxon>
    </lineage>
</organism>
<keyword id="KW-0007">Acetylation</keyword>
<keyword id="KW-0025">Alternative splicing</keyword>
<keyword id="KW-0225">Disease variant</keyword>
<keyword id="KW-0514">Muscle protein</keyword>
<keyword id="KW-0597">Phosphoprotein</keyword>
<keyword id="KW-1267">Proteomics identification</keyword>
<keyword id="KW-1185">Reference proteome</keyword>
<dbReference type="EMBL" id="M21984">
    <property type="protein sequence ID" value="AAA36777.1"/>
    <property type="molecule type" value="mRNA"/>
</dbReference>
<dbReference type="EMBL" id="AF026276">
    <property type="protein sequence ID" value="AAF21629.1"/>
    <property type="molecule type" value="Genomic_DNA"/>
</dbReference>
<dbReference type="EMBL" id="AK056968">
    <property type="protein sequence ID" value="BAG51835.1"/>
    <property type="molecule type" value="mRNA"/>
</dbReference>
<dbReference type="EMBL" id="DQ778624">
    <property type="protein sequence ID" value="ABG77458.1"/>
    <property type="molecule type" value="mRNA"/>
</dbReference>
<dbReference type="EMBL" id="BX640689">
    <property type="protein sequence ID" value="CAE45814.1"/>
    <property type="molecule type" value="mRNA"/>
</dbReference>
<dbReference type="EMBL" id="BT019997">
    <property type="protein sequence ID" value="AAV38800.1"/>
    <property type="molecule type" value="mRNA"/>
</dbReference>
<dbReference type="EMBL" id="CR541927">
    <property type="protein sequence ID" value="CAG46725.1"/>
    <property type="molecule type" value="mRNA"/>
</dbReference>
<dbReference type="EMBL" id="AC051649">
    <property type="status" value="NOT_ANNOTATED_CDS"/>
    <property type="molecule type" value="Genomic_DNA"/>
</dbReference>
<dbReference type="EMBL" id="BC050446">
    <property type="protein sequence ID" value="AAH50446.1"/>
    <property type="status" value="ALT_INIT"/>
    <property type="molecule type" value="mRNA"/>
</dbReference>
<dbReference type="EMBL" id="BC117327">
    <property type="protein sequence ID" value="AAI17328.1"/>
    <property type="molecule type" value="mRNA"/>
</dbReference>
<dbReference type="EMBL" id="BC171727">
    <property type="protein sequence ID" value="AAI71727.1"/>
    <property type="molecule type" value="mRNA"/>
</dbReference>
<dbReference type="EMBL" id="BC143537">
    <property type="protein sequence ID" value="AAI43538.1"/>
    <property type="molecule type" value="mRNA"/>
</dbReference>
<dbReference type="EMBL" id="U14641">
    <property type="protein sequence ID" value="AAA50359.1"/>
    <property type="molecule type" value="mRNA"/>
</dbReference>
<dbReference type="EMBL" id="U14642">
    <property type="protein sequence ID" value="AAA50360.1"/>
    <property type="molecule type" value="mRNA"/>
</dbReference>
<dbReference type="EMBL" id="U14643">
    <property type="protein sequence ID" value="AAA50361.1"/>
    <property type="molecule type" value="mRNA"/>
</dbReference>
<dbReference type="EMBL" id="U14644">
    <property type="protein sequence ID" value="AAA50362.1"/>
    <property type="molecule type" value="mRNA"/>
</dbReference>
<dbReference type="CCDS" id="CCDS41594.1">
    <molecule id="P45378-6"/>
</dbReference>
<dbReference type="CCDS" id="CCDS41595.1">
    <molecule id="P45378-4"/>
</dbReference>
<dbReference type="CCDS" id="CCDS41596.1">
    <molecule id="P45378-7"/>
</dbReference>
<dbReference type="CCDS" id="CCDS7727.1">
    <molecule id="P45378-2"/>
</dbReference>
<dbReference type="CCDS" id="CCDS86164.1">
    <molecule id="P45378-3"/>
</dbReference>
<dbReference type="CCDS" id="CCDS91403.1">
    <molecule id="P45378-1"/>
</dbReference>
<dbReference type="PIR" id="I53021">
    <property type="entry name" value="I53021"/>
</dbReference>
<dbReference type="PIR" id="S48660">
    <property type="entry name" value="S48660"/>
</dbReference>
<dbReference type="PIR" id="S74259">
    <property type="entry name" value="S74259"/>
</dbReference>
<dbReference type="PIR" id="S74260">
    <property type="entry name" value="S74260"/>
</dbReference>
<dbReference type="PIR" id="S74261">
    <property type="entry name" value="S74261"/>
</dbReference>
<dbReference type="RefSeq" id="NP_001036245.1">
    <molecule id="P45378-4"/>
    <property type="nucleotide sequence ID" value="NM_001042780.3"/>
</dbReference>
<dbReference type="RefSeq" id="NP_001036246.1">
    <molecule id="P45378-6"/>
    <property type="nucleotide sequence ID" value="NM_001042781.3"/>
</dbReference>
<dbReference type="RefSeq" id="NP_001036247.1">
    <molecule id="P45378-7"/>
    <property type="nucleotide sequence ID" value="NM_001042782.3"/>
</dbReference>
<dbReference type="RefSeq" id="NP_001284575.1">
    <molecule id="P45378-7"/>
    <property type="nucleotide sequence ID" value="NM_001297646.2"/>
</dbReference>
<dbReference type="RefSeq" id="NP_001350490.1">
    <molecule id="P45378-3"/>
    <property type="nucleotide sequence ID" value="NM_001363561.2"/>
</dbReference>
<dbReference type="RefSeq" id="NP_001354771.1">
    <molecule id="P45378-6"/>
    <property type="nucleotide sequence ID" value="NM_001367842.1"/>
</dbReference>
<dbReference type="RefSeq" id="NP_001354773.1">
    <molecule id="P45378-7"/>
    <property type="nucleotide sequence ID" value="NM_001367844.1"/>
</dbReference>
<dbReference type="RefSeq" id="NP_001354775.1">
    <molecule id="P45378-1"/>
    <property type="nucleotide sequence ID" value="NM_001367846.1"/>
</dbReference>
<dbReference type="RefSeq" id="NP_001354776.1">
    <molecule id="P45378-3"/>
    <property type="nucleotide sequence ID" value="NM_001367847.1"/>
</dbReference>
<dbReference type="RefSeq" id="NP_006748.1">
    <molecule id="P45378-2"/>
    <property type="nucleotide sequence ID" value="NM_006757.4"/>
</dbReference>
<dbReference type="RefSeq" id="XP_006718353.1">
    <property type="nucleotide sequence ID" value="XM_006718290.3"/>
</dbReference>
<dbReference type="RefSeq" id="XP_006718356.1">
    <property type="nucleotide sequence ID" value="XM_006718293.2"/>
</dbReference>
<dbReference type="RefSeq" id="XP_006718363.1">
    <molecule id="P45378-5"/>
    <property type="nucleotide sequence ID" value="XM_006718300.4"/>
</dbReference>
<dbReference type="RefSeq" id="XP_011518645.1">
    <molecule id="P45378-1"/>
    <property type="nucleotide sequence ID" value="XM_011520343.3"/>
</dbReference>
<dbReference type="RefSeq" id="XP_016873695.1">
    <molecule id="P45378-1"/>
    <property type="nucleotide sequence ID" value="XM_017018206.2"/>
</dbReference>
<dbReference type="RefSeq" id="XP_024304437.1">
    <molecule id="P45378-6"/>
    <property type="nucleotide sequence ID" value="XM_024448669.2"/>
</dbReference>
<dbReference type="RefSeq" id="XP_054188424.1">
    <molecule id="P45378-1"/>
    <property type="nucleotide sequence ID" value="XM_054332449.1"/>
</dbReference>
<dbReference type="RefSeq" id="XP_054188428.1">
    <molecule id="P45378-6"/>
    <property type="nucleotide sequence ID" value="XM_054332453.1"/>
</dbReference>
<dbReference type="RefSeq" id="XP_054188438.1">
    <molecule id="P45378-1"/>
    <property type="nucleotide sequence ID" value="XM_054332463.1"/>
</dbReference>
<dbReference type="RefSeq" id="XP_054188443.1">
    <molecule id="P45378-5"/>
    <property type="nucleotide sequence ID" value="XM_054332468.1"/>
</dbReference>
<dbReference type="RefSeq" id="XP_054225755.1">
    <molecule id="P45378-1"/>
    <property type="nucleotide sequence ID" value="XM_054369780.1"/>
</dbReference>
<dbReference type="RefSeq" id="XP_054225759.1">
    <molecule id="P45378-6"/>
    <property type="nucleotide sequence ID" value="XM_054369784.1"/>
</dbReference>
<dbReference type="RefSeq" id="XP_054225769.1">
    <molecule id="P45378-1"/>
    <property type="nucleotide sequence ID" value="XM_054369794.1"/>
</dbReference>
<dbReference type="RefSeq" id="XP_054225774.1">
    <molecule id="P45378-5"/>
    <property type="nucleotide sequence ID" value="XM_054369799.1"/>
</dbReference>
<dbReference type="BMRB" id="P45378"/>
<dbReference type="SMR" id="P45378"/>
<dbReference type="BioGRID" id="112994">
    <property type="interactions" value="31"/>
</dbReference>
<dbReference type="FunCoup" id="P45378">
    <property type="interactions" value="42"/>
</dbReference>
<dbReference type="IntAct" id="P45378">
    <property type="interactions" value="18"/>
</dbReference>
<dbReference type="MINT" id="P45378"/>
<dbReference type="STRING" id="9606.ENSP00000370975"/>
<dbReference type="ChEMBL" id="CHEMBL3831282"/>
<dbReference type="iPTMnet" id="P45378"/>
<dbReference type="PhosphoSitePlus" id="P45378"/>
<dbReference type="BioMuta" id="TNNT3"/>
<dbReference type="DMDM" id="33518637"/>
<dbReference type="MassIVE" id="P45378"/>
<dbReference type="PaxDb" id="9606-ENSP00000278317"/>
<dbReference type="PeptideAtlas" id="P45378"/>
<dbReference type="ProteomicsDB" id="55658">
    <molecule id="P45378-1"/>
</dbReference>
<dbReference type="ProteomicsDB" id="55659">
    <molecule id="P45378-2"/>
</dbReference>
<dbReference type="ProteomicsDB" id="55660">
    <molecule id="P45378-3"/>
</dbReference>
<dbReference type="ProteomicsDB" id="55661">
    <molecule id="P45378-4"/>
</dbReference>
<dbReference type="ProteomicsDB" id="55662">
    <molecule id="P45378-5"/>
</dbReference>
<dbReference type="ProteomicsDB" id="55663">
    <molecule id="P45378-6"/>
</dbReference>
<dbReference type="ProteomicsDB" id="55664">
    <molecule id="P45378-7"/>
</dbReference>
<dbReference type="Antibodypedia" id="22978">
    <property type="antibodies" value="281 antibodies from 30 providers"/>
</dbReference>
<dbReference type="DNASU" id="7140"/>
<dbReference type="Ensembl" id="ENST00000278317.11">
    <molecule id="P45378-2"/>
    <property type="protein sequence ID" value="ENSP00000278317.6"/>
    <property type="gene ID" value="ENSG00000130595.20"/>
</dbReference>
<dbReference type="Ensembl" id="ENST00000344578.8">
    <molecule id="P45378-5"/>
    <property type="protein sequence ID" value="ENSP00000344870.4"/>
    <property type="gene ID" value="ENSG00000130595.20"/>
</dbReference>
<dbReference type="Ensembl" id="ENST00000381558.6">
    <molecule id="P45378-7"/>
    <property type="protein sequence ID" value="ENSP00000370970.1"/>
    <property type="gene ID" value="ENSG00000130595.20"/>
</dbReference>
<dbReference type="Ensembl" id="ENST00000381563.8">
    <molecule id="P45378-3"/>
    <property type="protein sequence ID" value="ENSP00000370975.4"/>
    <property type="gene ID" value="ENSG00000130595.20"/>
</dbReference>
<dbReference type="Ensembl" id="ENST00000381579.7">
    <molecule id="P45378-4"/>
    <property type="protein sequence ID" value="ENSP00000370991.3"/>
    <property type="gene ID" value="ENSG00000130595.20"/>
</dbReference>
<dbReference type="Ensembl" id="ENST00000381589.7">
    <molecule id="P45378-6"/>
    <property type="protein sequence ID" value="ENSP00000371001.3"/>
    <property type="gene ID" value="ENSG00000130595.20"/>
</dbReference>
<dbReference type="Ensembl" id="ENST00000397301.5">
    <molecule id="P45378-1"/>
    <property type="protein sequence ID" value="ENSP00000380468.1"/>
    <property type="gene ID" value="ENSG00000130595.20"/>
</dbReference>
<dbReference type="Ensembl" id="ENST00000641119.1">
    <molecule id="P45378-6"/>
    <property type="protein sequence ID" value="ENSP00000492914.1"/>
    <property type="gene ID" value="ENSG00000130595.20"/>
</dbReference>
<dbReference type="Ensembl" id="ENST00000641787.1">
    <molecule id="P45378-7"/>
    <property type="protein sequence ID" value="ENSP00000493331.1"/>
    <property type="gene ID" value="ENSG00000130595.20"/>
</dbReference>
<dbReference type="Ensembl" id="ENST00000671850.1">
    <molecule id="P45378-6"/>
    <property type="protein sequence ID" value="ENSP00000500846.1"/>
    <property type="gene ID" value="ENSG00000288250.1"/>
</dbReference>
<dbReference type="Ensembl" id="ENST00000672214.1">
    <molecule id="P45378-2"/>
    <property type="protein sequence ID" value="ENSP00000500606.1"/>
    <property type="gene ID" value="ENSG00000288250.1"/>
</dbReference>
<dbReference type="Ensembl" id="ENST00000672629.1">
    <molecule id="P45378-6"/>
    <property type="protein sequence ID" value="ENSP00000500081.1"/>
    <property type="gene ID" value="ENSG00000288250.1"/>
</dbReference>
<dbReference type="Ensembl" id="ENST00000672659.1">
    <molecule id="P45378-4"/>
    <property type="protein sequence ID" value="ENSP00000500263.1"/>
    <property type="gene ID" value="ENSG00000288250.1"/>
</dbReference>
<dbReference type="Ensembl" id="ENST00000673082.1">
    <molecule id="P45378-1"/>
    <property type="protein sequence ID" value="ENSP00000500796.1"/>
    <property type="gene ID" value="ENSG00000288250.1"/>
</dbReference>
<dbReference type="Ensembl" id="ENST00000673157.1">
    <molecule id="P45378-7"/>
    <property type="protein sequence ID" value="ENSP00000499917.1"/>
    <property type="gene ID" value="ENSG00000288250.1"/>
</dbReference>
<dbReference type="Ensembl" id="ENST00000673174.1">
    <molecule id="P45378-5"/>
    <property type="protein sequence ID" value="ENSP00000500437.1"/>
    <property type="gene ID" value="ENSG00000288250.1"/>
</dbReference>
<dbReference type="Ensembl" id="ENST00000673503.1">
    <molecule id="P45378-7"/>
    <property type="protein sequence ID" value="ENSP00000500156.1"/>
    <property type="gene ID" value="ENSG00000288250.1"/>
</dbReference>
<dbReference type="Ensembl" id="ENST00000673572.1">
    <molecule id="P45378-3"/>
    <property type="protein sequence ID" value="ENSP00000500705.1"/>
    <property type="gene ID" value="ENSG00000288250.1"/>
</dbReference>
<dbReference type="GeneID" id="7140"/>
<dbReference type="KEGG" id="hsa:7140"/>
<dbReference type="MANE-Select" id="ENST00000278317.11">
    <molecule id="P45378-2"/>
    <property type="protein sequence ID" value="ENSP00000278317.6"/>
    <property type="RefSeq nucleotide sequence ID" value="NM_006757.4"/>
    <property type="RefSeq protein sequence ID" value="NP_006748.1"/>
</dbReference>
<dbReference type="UCSC" id="uc001luo.5">
    <molecule id="P45378-1"/>
    <property type="organism name" value="human"/>
</dbReference>
<dbReference type="AGR" id="HGNC:11950"/>
<dbReference type="CTD" id="7140"/>
<dbReference type="DisGeNET" id="7140"/>
<dbReference type="GeneCards" id="TNNT3"/>
<dbReference type="HGNC" id="HGNC:11950">
    <property type="gene designation" value="TNNT3"/>
</dbReference>
<dbReference type="HPA" id="ENSG00000130595">
    <property type="expression patterns" value="Group enriched (skeletal muscle, tongue)"/>
</dbReference>
<dbReference type="MalaCards" id="TNNT3"/>
<dbReference type="MIM" id="600692">
    <property type="type" value="gene"/>
</dbReference>
<dbReference type="MIM" id="618435">
    <property type="type" value="phenotype"/>
</dbReference>
<dbReference type="neXtProt" id="NX_P45378"/>
<dbReference type="OpenTargets" id="ENSG00000130595"/>
<dbReference type="Orphanet" id="1146">
    <property type="disease" value="Distal arthrogryposis type 1"/>
</dbReference>
<dbReference type="Orphanet" id="1147">
    <property type="disease" value="Sheldon-Hall syndrome"/>
</dbReference>
<dbReference type="PharmGKB" id="PA36639"/>
<dbReference type="VEuPathDB" id="HostDB:ENSG00000130595"/>
<dbReference type="eggNOG" id="KOG3634">
    <property type="taxonomic scope" value="Eukaryota"/>
</dbReference>
<dbReference type="GeneTree" id="ENSGT00940000158477"/>
<dbReference type="HOGENOM" id="CLU_076377_2_0_1"/>
<dbReference type="InParanoid" id="P45378"/>
<dbReference type="OMA" id="YDMQELA"/>
<dbReference type="OrthoDB" id="330499at2759"/>
<dbReference type="PAN-GO" id="P45378">
    <property type="GO annotations" value="6 GO annotations based on evolutionary models"/>
</dbReference>
<dbReference type="PhylomeDB" id="P45378"/>
<dbReference type="TreeFam" id="TF313321"/>
<dbReference type="PathwayCommons" id="P45378"/>
<dbReference type="Reactome" id="R-HSA-390522">
    <property type="pathway name" value="Striated Muscle Contraction"/>
</dbReference>
<dbReference type="SignaLink" id="P45378"/>
<dbReference type="SIGNOR" id="P45378"/>
<dbReference type="BioGRID-ORCS" id="7140">
    <property type="hits" value="9 hits in 1148 CRISPR screens"/>
</dbReference>
<dbReference type="ChiTaRS" id="TNNT3">
    <property type="organism name" value="human"/>
</dbReference>
<dbReference type="GeneWiki" id="TNNT3"/>
<dbReference type="GenomeRNAi" id="7140"/>
<dbReference type="Pharos" id="P45378">
    <property type="development level" value="Tbio"/>
</dbReference>
<dbReference type="PRO" id="PR:P45378"/>
<dbReference type="Proteomes" id="UP000005640">
    <property type="component" value="Chromosome 11"/>
</dbReference>
<dbReference type="RNAct" id="P45378">
    <property type="molecule type" value="protein"/>
</dbReference>
<dbReference type="Bgee" id="ENSG00000130595">
    <property type="expression patterns" value="Expressed in hindlimb stylopod muscle and 94 other cell types or tissues"/>
</dbReference>
<dbReference type="ExpressionAtlas" id="P45378">
    <property type="expression patterns" value="baseline and differential"/>
</dbReference>
<dbReference type="GO" id="GO:0005829">
    <property type="term" value="C:cytosol"/>
    <property type="evidence" value="ECO:0000304"/>
    <property type="project" value="Reactome"/>
</dbReference>
<dbReference type="GO" id="GO:0005861">
    <property type="term" value="C:troponin complex"/>
    <property type="evidence" value="ECO:0000314"/>
    <property type="project" value="UniProtKB"/>
</dbReference>
<dbReference type="GO" id="GO:0048306">
    <property type="term" value="F:calcium-dependent protein binding"/>
    <property type="evidence" value="ECO:0000314"/>
    <property type="project" value="UniProtKB"/>
</dbReference>
<dbReference type="GO" id="GO:0005523">
    <property type="term" value="F:tropomyosin binding"/>
    <property type="evidence" value="ECO:0000315"/>
    <property type="project" value="UniProtKB"/>
</dbReference>
<dbReference type="GO" id="GO:0030172">
    <property type="term" value="F:troponin C binding"/>
    <property type="evidence" value="ECO:0000353"/>
    <property type="project" value="UniProtKB"/>
</dbReference>
<dbReference type="GO" id="GO:0031013">
    <property type="term" value="F:troponin I binding"/>
    <property type="evidence" value="ECO:0000353"/>
    <property type="project" value="UniProtKB"/>
</dbReference>
<dbReference type="GO" id="GO:1903612">
    <property type="term" value="P:positive regulation of calcium-dependent ATPase activity"/>
    <property type="evidence" value="ECO:0000314"/>
    <property type="project" value="UniProtKB"/>
</dbReference>
<dbReference type="GO" id="GO:0043462">
    <property type="term" value="P:regulation of ATP-dependent activity"/>
    <property type="evidence" value="ECO:0000314"/>
    <property type="project" value="UniProtKB"/>
</dbReference>
<dbReference type="GO" id="GO:0006942">
    <property type="term" value="P:regulation of striated muscle contraction"/>
    <property type="evidence" value="ECO:0000314"/>
    <property type="project" value="UniProtKB"/>
</dbReference>
<dbReference type="GO" id="GO:0003009">
    <property type="term" value="P:skeletal muscle contraction"/>
    <property type="evidence" value="ECO:0000314"/>
    <property type="project" value="UniProtKB"/>
</dbReference>
<dbReference type="FunFam" id="1.20.5.350:FF:000001">
    <property type="entry name" value="Troponin T, fast skeletal muscle"/>
    <property type="match status" value="1"/>
</dbReference>
<dbReference type="Gene3D" id="1.20.5.350">
    <property type="match status" value="1"/>
</dbReference>
<dbReference type="InterPro" id="IPR027707">
    <property type="entry name" value="TNNT"/>
</dbReference>
<dbReference type="InterPro" id="IPR001978">
    <property type="entry name" value="Troponin"/>
</dbReference>
<dbReference type="InterPro" id="IPR038077">
    <property type="entry name" value="Troponin_sf"/>
</dbReference>
<dbReference type="PANTHER" id="PTHR11521">
    <property type="entry name" value="TROPONIN T"/>
    <property type="match status" value="1"/>
</dbReference>
<dbReference type="PANTHER" id="PTHR11521:SF4">
    <property type="entry name" value="TROPONIN T, FAST SKELETAL MUSCLE"/>
    <property type="match status" value="1"/>
</dbReference>
<dbReference type="Pfam" id="PF00992">
    <property type="entry name" value="Troponin"/>
    <property type="match status" value="1"/>
</dbReference>
<dbReference type="SUPFAM" id="SSF90250">
    <property type="entry name" value="Troponin coil-coiled subunits"/>
    <property type="match status" value="1"/>
</dbReference>
<name>TNNT3_HUMAN</name>
<evidence type="ECO:0000250" key="1">
    <source>
        <dbReference type="UniProtKB" id="P02641"/>
    </source>
</evidence>
<evidence type="ECO:0000250" key="2">
    <source>
        <dbReference type="UniProtKB" id="P09739"/>
    </source>
</evidence>
<evidence type="ECO:0000250" key="3">
    <source>
        <dbReference type="UniProtKB" id="Q9QZ47"/>
    </source>
</evidence>
<evidence type="ECO:0000256" key="4">
    <source>
        <dbReference type="SAM" id="MobiDB-lite"/>
    </source>
</evidence>
<evidence type="ECO:0000269" key="5">
    <source>
    </source>
</evidence>
<evidence type="ECO:0000269" key="6">
    <source>
    </source>
</evidence>
<evidence type="ECO:0000269" key="7">
    <source>
    </source>
</evidence>
<evidence type="ECO:0000269" key="8">
    <source>
    </source>
</evidence>
<evidence type="ECO:0000303" key="9">
    <source>
    </source>
</evidence>
<evidence type="ECO:0000303" key="10">
    <source>
    </source>
</evidence>
<evidence type="ECO:0000303" key="11">
    <source>
    </source>
</evidence>
<evidence type="ECO:0000303" key="12">
    <source>
    </source>
</evidence>
<evidence type="ECO:0000303" key="13">
    <source>
    </source>
</evidence>
<evidence type="ECO:0000303" key="14">
    <source ref="4"/>
</evidence>
<evidence type="ECO:0000303" key="15">
    <source ref="6"/>
</evidence>
<evidence type="ECO:0000303" key="16">
    <source ref="7"/>
</evidence>
<evidence type="ECO:0000305" key="17"/>
<gene>
    <name type="primary">TNNT3</name>
</gene>
<feature type="initiator methionine" description="Removed" evidence="1">
    <location>
        <position position="1"/>
    </location>
</feature>
<feature type="chain" id="PRO_0000186178" description="Troponin T, fast skeletal muscle">
    <location>
        <begin position="2"/>
        <end position="269"/>
    </location>
</feature>
<feature type="region of interest" description="Disordered" evidence="4">
    <location>
        <begin position="1"/>
        <end position="72"/>
    </location>
</feature>
<feature type="region of interest" description="Disordered" evidence="4">
    <location>
        <begin position="111"/>
        <end position="158"/>
    </location>
</feature>
<feature type="region of interest" description="Disordered" evidence="4">
    <location>
        <begin position="245"/>
        <end position="269"/>
    </location>
</feature>
<feature type="compositionally biased region" description="Acidic residues" evidence="4">
    <location>
        <begin position="1"/>
        <end position="23"/>
    </location>
</feature>
<feature type="compositionally biased region" description="Basic and acidic residues" evidence="4">
    <location>
        <begin position="24"/>
        <end position="34"/>
    </location>
</feature>
<feature type="compositionally biased region" description="Acidic residues" evidence="4">
    <location>
        <begin position="35"/>
        <end position="47"/>
    </location>
</feature>
<feature type="compositionally biased region" description="Basic and acidic residues" evidence="4">
    <location>
        <begin position="60"/>
        <end position="72"/>
    </location>
</feature>
<feature type="compositionally biased region" description="Basic and acidic residues" evidence="4">
    <location>
        <begin position="111"/>
        <end position="153"/>
    </location>
</feature>
<feature type="modified residue" description="N-acetylserine" evidence="1">
    <location>
        <position position="2"/>
    </location>
</feature>
<feature type="modified residue" description="Phosphoserine" evidence="2">
    <location>
        <position position="2"/>
    </location>
</feature>
<feature type="modified residue" description="Phosphoserine" evidence="2">
    <location>
        <position position="88"/>
    </location>
</feature>
<feature type="modified residue" description="Phosphoserine" evidence="3">
    <location>
        <position position="159"/>
    </location>
</feature>
<feature type="modified residue" description="Phosphoserine" evidence="2">
    <location>
        <position position="166"/>
    </location>
</feature>
<feature type="modified residue" description="Phosphoserine" evidence="2">
    <location>
        <position position="167"/>
    </location>
</feature>
<feature type="splice variant" id="VSP_009121" description="In isoform 5." evidence="12">
    <location>
        <begin position="23"/>
        <end position="46"/>
    </location>
</feature>
<feature type="splice variant" id="VSP_007914" description="In isoform 2, isoform 4 and isoform 7." evidence="9 10 12 13 14">
    <location>
        <begin position="23"/>
        <end position="33"/>
    </location>
</feature>
<feature type="splice variant" id="VSP_034964" description="In isoform 6." evidence="10 11 15 16">
    <location>
        <begin position="34"/>
        <end position="46"/>
    </location>
</feature>
<feature type="splice variant" id="VSP_007915" description="In isoform 3, isoform 4 and isoform 7." evidence="9 10 12 14">
    <location>
        <begin position="39"/>
        <end position="46"/>
    </location>
</feature>
<feature type="splice variant" id="VSP_007916" description="In isoform 4." evidence="10 12">
    <original>TTLRSRIDQAQKH</original>
    <variation>MNVRARVQMLAKF</variation>
    <location>
        <begin position="240"/>
        <end position="252"/>
    </location>
</feature>
<feature type="sequence variant" id="VAR_082280" description="In DA2B2; dbSNP:rs199474721." evidence="7">
    <original>R</original>
    <variation>C</variation>
    <location>
        <position position="74"/>
    </location>
</feature>
<feature type="sequence variant" id="VAR_026453" description="In DA2B2; dbSNP:rs121434638." evidence="5 6 8">
    <original>R</original>
    <variation>H</variation>
    <location>
        <position position="74"/>
    </location>
</feature>
<feature type="sequence conflict" description="In Ref. 5; CAE45814." evidence="17" ref="5">
    <original>E</original>
    <variation>G</variation>
    <location>
        <position position="149"/>
    </location>
</feature>
<proteinExistence type="evidence at protein level"/>
<sequence>MSDEEVEQVEEQYEEEEEAQEEAAEVHEEVHEPEEVQEDTAEEDAEEEKPRPKLTAPKIPEGEKVDFDDIQKKRQNKDLMELQALIDSHFEARKKEEEELVALKERIEKRRAERAEQQRIRAEKERERQNRLAEEKARREEEDAKRRAEDDLKKKKALSSMGANYSSYLAKADQKRGKKQTAREMKKKILAERRKPLNIDHLGEDKLRDKAKELWETLHQLEIDKFEFGEKLKRQKYDITTLRSRIDQAQKHSKKAGTPAKGKVGGRWK</sequence>
<protein>
    <recommendedName>
        <fullName>Troponin T, fast skeletal muscle</fullName>
        <shortName>TnTf</shortName>
    </recommendedName>
    <alternativeName>
        <fullName>Beta-TnTF</fullName>
    </alternativeName>
    <alternativeName>
        <fullName>Fast skeletal muscle troponin T</fullName>
        <shortName>fTnT</shortName>
    </alternativeName>
</protein>
<comment type="function">
    <text>Troponin T is the tropomyosin-binding subunit of troponin, the thin filament regulatory complex which confers calcium-sensitivity to striated muscle actomyosin ATPase activity.</text>
</comment>
<comment type="alternative products">
    <event type="alternative splicing"/>
    <isoform>
        <id>P45378-1</id>
        <name>1</name>
        <name>Tnt1</name>
        <sequence type="displayed"/>
    </isoform>
    <isoform>
        <id>P45378-2</id>
        <name>2</name>
        <name>Tnt3</name>
        <sequence type="described" ref="VSP_007914"/>
    </isoform>
    <isoform>
        <id>P45378-3</id>
        <name>3</name>
        <name>Tnt1f</name>
        <sequence type="described" ref="VSP_007915"/>
    </isoform>
    <isoform>
        <id>P45378-4</id>
        <name>4</name>
        <name>Tnt3f</name>
        <sequence type="described" ref="VSP_007914 VSP_007915 VSP_007916"/>
    </isoform>
    <isoform>
        <id>P45378-5</id>
        <name>5</name>
        <name>Tnt3f*</name>
        <sequence type="described" ref="VSP_009121"/>
    </isoform>
    <isoform>
        <id>P45378-6</id>
        <name>6</name>
        <sequence type="described" ref="VSP_034964"/>
    </isoform>
    <isoform>
        <id>P45378-7</id>
        <name>7</name>
        <sequence type="described" ref="VSP_007914 VSP_007915"/>
    </isoform>
    <text>Additional isoforms seem to exist.</text>
</comment>
<comment type="tissue specificity">
    <text>In fetal and adult fast skeletal muscles, with a higher level expression in fetal than in adult muscle.</text>
</comment>
<comment type="disease" evidence="5 6 7 8">
    <disease id="DI-05569">
        <name>Arthrogryposis, distal, 2B2</name>
        <acronym>DA2B2</acronym>
        <description>A form of distal arthrogryposis, a disease characterized by congenital joint contractures that mainly involve two or more distal parts of the limbs, in the absence of a primary neurological or muscle disease. Distal arthrogryposis type 2 is characterized by contractures of the hands and feet, and a distinctive face characterized by prominent nasolabial folds, small mouth and downslanting palpebral fissures. DA2B2 inheritance is autosomal dominant.</description>
        <dbReference type="MIM" id="618435"/>
    </disease>
    <text>The disease is caused by variants affecting the gene represented in this entry.</text>
</comment>
<comment type="miscellaneous">
    <molecule>Isoform 5</molecule>
    <text evidence="17">Minor isoform detected in approximately 1% of cDNA clones.</text>
</comment>
<comment type="similarity">
    <text evidence="17">Belongs to the troponin T family.</text>
</comment>
<comment type="sequence caution" evidence="17">
    <conflict type="erroneous initiation">
        <sequence resource="EMBL-CDS" id="AAH50446"/>
    </conflict>
</comment>